<keyword id="KW-0963">Cytoplasm</keyword>
<keyword id="KW-0396">Initiation factor</keyword>
<keyword id="KW-0648">Protein biosynthesis</keyword>
<keyword id="KW-1185">Reference proteome</keyword>
<keyword id="KW-0694">RNA-binding</keyword>
<keyword id="KW-0699">rRNA-binding</keyword>
<protein>
    <recommendedName>
        <fullName evidence="1">Translation initiation factor IF-1 1</fullName>
    </recommendedName>
</protein>
<name>IF11_BURMA</name>
<proteinExistence type="inferred from homology"/>
<feature type="chain" id="PRO_0000095759" description="Translation initiation factor IF-1 1">
    <location>
        <begin position="1"/>
        <end position="88"/>
    </location>
</feature>
<feature type="domain" description="S1-like" evidence="1">
    <location>
        <begin position="1"/>
        <end position="72"/>
    </location>
</feature>
<organism>
    <name type="scientific">Burkholderia mallei (strain ATCC 23344)</name>
    <dbReference type="NCBI Taxonomy" id="243160"/>
    <lineage>
        <taxon>Bacteria</taxon>
        <taxon>Pseudomonadati</taxon>
        <taxon>Pseudomonadota</taxon>
        <taxon>Betaproteobacteria</taxon>
        <taxon>Burkholderiales</taxon>
        <taxon>Burkholderiaceae</taxon>
        <taxon>Burkholderia</taxon>
        <taxon>pseudomallei group</taxon>
    </lineage>
</organism>
<evidence type="ECO:0000255" key="1">
    <source>
        <dbReference type="HAMAP-Rule" id="MF_00075"/>
    </source>
</evidence>
<dbReference type="EMBL" id="CP000010">
    <property type="protein sequence ID" value="AAU50283.1"/>
    <property type="molecule type" value="Genomic_DNA"/>
</dbReference>
<dbReference type="RefSeq" id="YP_103767.1">
    <property type="nucleotide sequence ID" value="NC_006348.1"/>
</dbReference>
<dbReference type="SMR" id="Q62HQ3"/>
<dbReference type="KEGG" id="bma:BMA2202"/>
<dbReference type="eggNOG" id="COG0361">
    <property type="taxonomic scope" value="Bacteria"/>
</dbReference>
<dbReference type="HOGENOM" id="CLU_151267_4_1_4"/>
<dbReference type="Proteomes" id="UP000006693">
    <property type="component" value="Chromosome 1"/>
</dbReference>
<dbReference type="GO" id="GO:0005829">
    <property type="term" value="C:cytosol"/>
    <property type="evidence" value="ECO:0007669"/>
    <property type="project" value="TreeGrafter"/>
</dbReference>
<dbReference type="GO" id="GO:0043022">
    <property type="term" value="F:ribosome binding"/>
    <property type="evidence" value="ECO:0007669"/>
    <property type="project" value="UniProtKB-UniRule"/>
</dbReference>
<dbReference type="GO" id="GO:0019843">
    <property type="term" value="F:rRNA binding"/>
    <property type="evidence" value="ECO:0007669"/>
    <property type="project" value="UniProtKB-UniRule"/>
</dbReference>
<dbReference type="GO" id="GO:0003743">
    <property type="term" value="F:translation initiation factor activity"/>
    <property type="evidence" value="ECO:0007669"/>
    <property type="project" value="UniProtKB-UniRule"/>
</dbReference>
<dbReference type="CDD" id="cd04451">
    <property type="entry name" value="S1_IF1"/>
    <property type="match status" value="1"/>
</dbReference>
<dbReference type="FunFam" id="2.40.50.140:FF:000002">
    <property type="entry name" value="Translation initiation factor IF-1"/>
    <property type="match status" value="1"/>
</dbReference>
<dbReference type="Gene3D" id="2.40.50.140">
    <property type="entry name" value="Nucleic acid-binding proteins"/>
    <property type="match status" value="1"/>
</dbReference>
<dbReference type="HAMAP" id="MF_00075">
    <property type="entry name" value="IF_1"/>
    <property type="match status" value="1"/>
</dbReference>
<dbReference type="InterPro" id="IPR012340">
    <property type="entry name" value="NA-bd_OB-fold"/>
</dbReference>
<dbReference type="InterPro" id="IPR006196">
    <property type="entry name" value="RNA-binding_domain_S1_IF1"/>
</dbReference>
<dbReference type="InterPro" id="IPR003029">
    <property type="entry name" value="S1_domain"/>
</dbReference>
<dbReference type="InterPro" id="IPR004368">
    <property type="entry name" value="TIF_IF1"/>
</dbReference>
<dbReference type="NCBIfam" id="TIGR00008">
    <property type="entry name" value="infA"/>
    <property type="match status" value="1"/>
</dbReference>
<dbReference type="PANTHER" id="PTHR33370">
    <property type="entry name" value="TRANSLATION INITIATION FACTOR IF-1, CHLOROPLASTIC"/>
    <property type="match status" value="1"/>
</dbReference>
<dbReference type="PANTHER" id="PTHR33370:SF1">
    <property type="entry name" value="TRANSLATION INITIATION FACTOR IF-1, CHLOROPLASTIC"/>
    <property type="match status" value="1"/>
</dbReference>
<dbReference type="Pfam" id="PF01176">
    <property type="entry name" value="eIF-1a"/>
    <property type="match status" value="1"/>
</dbReference>
<dbReference type="SMART" id="SM00316">
    <property type="entry name" value="S1"/>
    <property type="match status" value="1"/>
</dbReference>
<dbReference type="SUPFAM" id="SSF50249">
    <property type="entry name" value="Nucleic acid-binding proteins"/>
    <property type="match status" value="1"/>
</dbReference>
<dbReference type="PROSITE" id="PS50832">
    <property type="entry name" value="S1_IF1_TYPE"/>
    <property type="match status" value="1"/>
</dbReference>
<comment type="function">
    <text evidence="1">One of the essential components for the initiation of protein synthesis. Stabilizes the binding of IF-2 and IF-3 on the 30S subunit to which N-formylmethionyl-tRNA(fMet) subsequently binds. Helps modulate mRNA selection, yielding the 30S pre-initiation complex (PIC). Upon addition of the 50S ribosomal subunit IF-1, IF-2 and IF-3 are released leaving the mature 70S translation initiation complex.</text>
</comment>
<comment type="subunit">
    <text evidence="1">Component of the 30S ribosomal translation pre-initiation complex which assembles on the 30S ribosome in the order IF-2 and IF-3, IF-1 and N-formylmethionyl-tRNA(fMet); mRNA recruitment can occur at any time during PIC assembly.</text>
</comment>
<comment type="subcellular location">
    <subcellularLocation>
        <location evidence="1">Cytoplasm</location>
    </subcellularLocation>
</comment>
<comment type="similarity">
    <text evidence="1">Belongs to the IF-1 family.</text>
</comment>
<accession>Q62HQ3</accession>
<reference key="1">
    <citation type="journal article" date="2004" name="Proc. Natl. Acad. Sci. U.S.A.">
        <title>Structural flexibility in the Burkholderia mallei genome.</title>
        <authorList>
            <person name="Nierman W.C."/>
            <person name="DeShazer D."/>
            <person name="Kim H.S."/>
            <person name="Tettelin H."/>
            <person name="Nelson K.E."/>
            <person name="Feldblyum T.V."/>
            <person name="Ulrich R.L."/>
            <person name="Ronning C.M."/>
            <person name="Brinkac L.M."/>
            <person name="Daugherty S.C."/>
            <person name="Davidsen T.D."/>
            <person name="DeBoy R.T."/>
            <person name="Dimitrov G."/>
            <person name="Dodson R.J."/>
            <person name="Durkin A.S."/>
            <person name="Gwinn M.L."/>
            <person name="Haft D.H."/>
            <person name="Khouri H.M."/>
            <person name="Kolonay J.F."/>
            <person name="Madupu R."/>
            <person name="Mohammoud Y."/>
            <person name="Nelson W.C."/>
            <person name="Radune D."/>
            <person name="Romero C.M."/>
            <person name="Sarria S."/>
            <person name="Selengut J."/>
            <person name="Shamblin C."/>
            <person name="Sullivan S.A."/>
            <person name="White O."/>
            <person name="Yu Y."/>
            <person name="Zafar N."/>
            <person name="Zhou L."/>
            <person name="Fraser C.M."/>
        </authorList>
    </citation>
    <scope>NUCLEOTIDE SEQUENCE [LARGE SCALE GENOMIC DNA]</scope>
    <source>
        <strain>ATCC 23344</strain>
    </source>
</reference>
<gene>
    <name evidence="1" type="primary">infA1</name>
    <name type="synonym">infA-1</name>
    <name type="ordered locus">BMA2202</name>
</gene>
<sequence length="88" mass="10078">MAKEELIELDGIVDEVLPDSRYRVTLDNGVVVGAYASGQMRRHRIRILAGDRVTLELSVYDLTKGRINFRHKDERRSDAAPRASARRR</sequence>